<proteinExistence type="inferred from homology"/>
<name>GLGC_GEOMG</name>
<comment type="function">
    <text evidence="1">Involved in the biosynthesis of ADP-glucose, a building block required for the elongation reactions to produce glycogen. Catalyzes the reaction between ATP and alpha-D-glucose 1-phosphate (G1P) to produce pyrophosphate and ADP-Glc.</text>
</comment>
<comment type="catalytic activity">
    <reaction evidence="1">
        <text>alpha-D-glucose 1-phosphate + ATP + H(+) = ADP-alpha-D-glucose + diphosphate</text>
        <dbReference type="Rhea" id="RHEA:12120"/>
        <dbReference type="ChEBI" id="CHEBI:15378"/>
        <dbReference type="ChEBI" id="CHEBI:30616"/>
        <dbReference type="ChEBI" id="CHEBI:33019"/>
        <dbReference type="ChEBI" id="CHEBI:57498"/>
        <dbReference type="ChEBI" id="CHEBI:58601"/>
        <dbReference type="EC" id="2.7.7.27"/>
    </reaction>
</comment>
<comment type="pathway">
    <text evidence="1">Glycan biosynthesis; glycogen biosynthesis.</text>
</comment>
<comment type="subunit">
    <text evidence="1">Homotetramer.</text>
</comment>
<comment type="similarity">
    <text evidence="1">Belongs to the bacterial/plant glucose-1-phosphate adenylyltransferase family.</text>
</comment>
<feature type="chain" id="PRO_0000261872" description="Glucose-1-phosphate adenylyltransferase">
    <location>
        <begin position="1"/>
        <end position="412"/>
    </location>
</feature>
<feature type="binding site" evidence="1">
    <location>
        <position position="169"/>
    </location>
    <ligand>
        <name>alpha-D-glucose 1-phosphate</name>
        <dbReference type="ChEBI" id="CHEBI:58601"/>
    </ligand>
</feature>
<feature type="binding site" evidence="1">
    <location>
        <begin position="184"/>
        <end position="185"/>
    </location>
    <ligand>
        <name>alpha-D-glucose 1-phosphate</name>
        <dbReference type="ChEBI" id="CHEBI:58601"/>
    </ligand>
</feature>
<feature type="binding site" evidence="1">
    <location>
        <position position="201"/>
    </location>
    <ligand>
        <name>alpha-D-glucose 1-phosphate</name>
        <dbReference type="ChEBI" id="CHEBI:58601"/>
    </ligand>
</feature>
<protein>
    <recommendedName>
        <fullName evidence="1">Glucose-1-phosphate adenylyltransferase</fullName>
        <ecNumber evidence="1">2.7.7.27</ecNumber>
    </recommendedName>
    <alternativeName>
        <fullName evidence="1">ADP-glucose pyrophosphorylase</fullName>
        <shortName evidence="1">ADPGlc PPase</shortName>
    </alternativeName>
    <alternativeName>
        <fullName evidence="1">ADP-glucose synthase</fullName>
    </alternativeName>
</protein>
<evidence type="ECO:0000255" key="1">
    <source>
        <dbReference type="HAMAP-Rule" id="MF_00624"/>
    </source>
</evidence>
<gene>
    <name evidence="1" type="primary">glgC</name>
    <name type="ordered locus">Gmet_2768</name>
</gene>
<dbReference type="EC" id="2.7.7.27" evidence="1"/>
<dbReference type="EMBL" id="CP000148">
    <property type="protein sequence ID" value="ABB32986.1"/>
    <property type="molecule type" value="Genomic_DNA"/>
</dbReference>
<dbReference type="RefSeq" id="WP_004511693.1">
    <property type="nucleotide sequence ID" value="NC_007517.1"/>
</dbReference>
<dbReference type="SMR" id="Q39RY8"/>
<dbReference type="STRING" id="269799.Gmet_2768"/>
<dbReference type="KEGG" id="gme:Gmet_2768"/>
<dbReference type="eggNOG" id="COG0448">
    <property type="taxonomic scope" value="Bacteria"/>
</dbReference>
<dbReference type="HOGENOM" id="CLU_029499_14_1_7"/>
<dbReference type="UniPathway" id="UPA00164"/>
<dbReference type="Proteomes" id="UP000007073">
    <property type="component" value="Chromosome"/>
</dbReference>
<dbReference type="GO" id="GO:0005524">
    <property type="term" value="F:ATP binding"/>
    <property type="evidence" value="ECO:0007669"/>
    <property type="project" value="UniProtKB-KW"/>
</dbReference>
<dbReference type="GO" id="GO:0008878">
    <property type="term" value="F:glucose-1-phosphate adenylyltransferase activity"/>
    <property type="evidence" value="ECO:0007669"/>
    <property type="project" value="UniProtKB-UniRule"/>
</dbReference>
<dbReference type="GO" id="GO:0005978">
    <property type="term" value="P:glycogen biosynthetic process"/>
    <property type="evidence" value="ECO:0007669"/>
    <property type="project" value="UniProtKB-UniRule"/>
</dbReference>
<dbReference type="CDD" id="cd02508">
    <property type="entry name" value="ADP_Glucose_PP"/>
    <property type="match status" value="1"/>
</dbReference>
<dbReference type="CDD" id="cd04651">
    <property type="entry name" value="LbH_G1P_AT_C"/>
    <property type="match status" value="1"/>
</dbReference>
<dbReference type="Gene3D" id="2.160.10.10">
    <property type="entry name" value="Hexapeptide repeat proteins"/>
    <property type="match status" value="1"/>
</dbReference>
<dbReference type="Gene3D" id="3.90.550.10">
    <property type="entry name" value="Spore Coat Polysaccharide Biosynthesis Protein SpsA, Chain A"/>
    <property type="match status" value="1"/>
</dbReference>
<dbReference type="HAMAP" id="MF_00624">
    <property type="entry name" value="GlgC"/>
    <property type="match status" value="1"/>
</dbReference>
<dbReference type="InterPro" id="IPR011831">
    <property type="entry name" value="ADP-Glc_PPase"/>
</dbReference>
<dbReference type="InterPro" id="IPR005836">
    <property type="entry name" value="ADP_Glu_pyroP_CS"/>
</dbReference>
<dbReference type="InterPro" id="IPR023049">
    <property type="entry name" value="GlgC_bac"/>
</dbReference>
<dbReference type="InterPro" id="IPR056818">
    <property type="entry name" value="GlmU/GlgC-like_hexapep"/>
</dbReference>
<dbReference type="InterPro" id="IPR005835">
    <property type="entry name" value="NTP_transferase_dom"/>
</dbReference>
<dbReference type="InterPro" id="IPR029044">
    <property type="entry name" value="Nucleotide-diphossugar_trans"/>
</dbReference>
<dbReference type="InterPro" id="IPR011004">
    <property type="entry name" value="Trimer_LpxA-like_sf"/>
</dbReference>
<dbReference type="NCBIfam" id="TIGR02091">
    <property type="entry name" value="glgC"/>
    <property type="match status" value="1"/>
</dbReference>
<dbReference type="NCBIfam" id="NF001947">
    <property type="entry name" value="PRK00725.1"/>
    <property type="match status" value="1"/>
</dbReference>
<dbReference type="NCBIfam" id="NF002023">
    <property type="entry name" value="PRK00844.1"/>
    <property type="match status" value="1"/>
</dbReference>
<dbReference type="PANTHER" id="PTHR43523:SF2">
    <property type="entry name" value="GLUCOSE-1-PHOSPHATE ADENYLYLTRANSFERASE"/>
    <property type="match status" value="1"/>
</dbReference>
<dbReference type="PANTHER" id="PTHR43523">
    <property type="entry name" value="GLUCOSE-1-PHOSPHATE ADENYLYLTRANSFERASE-RELATED"/>
    <property type="match status" value="1"/>
</dbReference>
<dbReference type="Pfam" id="PF24894">
    <property type="entry name" value="Hexapep_GlmU"/>
    <property type="match status" value="1"/>
</dbReference>
<dbReference type="Pfam" id="PF00483">
    <property type="entry name" value="NTP_transferase"/>
    <property type="match status" value="1"/>
</dbReference>
<dbReference type="SUPFAM" id="SSF53448">
    <property type="entry name" value="Nucleotide-diphospho-sugar transferases"/>
    <property type="match status" value="1"/>
</dbReference>
<dbReference type="SUPFAM" id="SSF51161">
    <property type="entry name" value="Trimeric LpxA-like enzymes"/>
    <property type="match status" value="1"/>
</dbReference>
<dbReference type="PROSITE" id="PS00809">
    <property type="entry name" value="ADP_GLC_PYROPHOSPH_2"/>
    <property type="match status" value="1"/>
</dbReference>
<dbReference type="PROSITE" id="PS00810">
    <property type="entry name" value="ADP_GLC_PYROPHOSPH_3"/>
    <property type="match status" value="1"/>
</dbReference>
<sequence>MYVTGNLAGNTIAMVLAGGKGERLAPLTLRRPKPGVAFGGKYKIIDFVLSNMFNSGIKKVYILTQYRAYSLMKHIRESWGKWAGLGEFFVAISPETSSESEEWFKGTADAINHYLRFIESSDADYVAIFGGDHIYRMDVSQMIGYHRRNRADITIAALEVPVEEARRFGVFCVDDDNRVTAFEEKPANPVTIPGRETCFASMGNYIFSTRRLIEVLQEGKKLHADLDFGKHVIPMMLAKKDRVFAYNFNDNLIPGMKPEERGYWKDVGTIDSYYEANMELIHVSPQLNLYNYKWPILTNQGNYPPAKTVFDEDGRRGMNIDSYVCAGCITSGSVVRRSIVGPLTKVNSYSLVEDSILFENVNVGRNVKIRRAIIDKNITIPDGTTIGYDHGEDRRRGYTVTESGIVVVSPAE</sequence>
<accession>Q39RY8</accession>
<reference key="1">
    <citation type="journal article" date="2009" name="BMC Microbiol.">
        <title>The genome sequence of Geobacter metallireducens: features of metabolism, physiology and regulation common and dissimilar to Geobacter sulfurreducens.</title>
        <authorList>
            <person name="Aklujkar M."/>
            <person name="Krushkal J."/>
            <person name="DiBartolo G."/>
            <person name="Lapidus A."/>
            <person name="Land M.L."/>
            <person name="Lovley D.R."/>
        </authorList>
    </citation>
    <scope>NUCLEOTIDE SEQUENCE [LARGE SCALE GENOMIC DNA]</scope>
    <source>
        <strain>ATCC 53774 / DSM 7210 / GS-15</strain>
    </source>
</reference>
<organism>
    <name type="scientific">Geobacter metallireducens (strain ATCC 53774 / DSM 7210 / GS-15)</name>
    <dbReference type="NCBI Taxonomy" id="269799"/>
    <lineage>
        <taxon>Bacteria</taxon>
        <taxon>Pseudomonadati</taxon>
        <taxon>Thermodesulfobacteriota</taxon>
        <taxon>Desulfuromonadia</taxon>
        <taxon>Geobacterales</taxon>
        <taxon>Geobacteraceae</taxon>
        <taxon>Geobacter</taxon>
    </lineage>
</organism>
<keyword id="KW-0067">ATP-binding</keyword>
<keyword id="KW-0119">Carbohydrate metabolism</keyword>
<keyword id="KW-0320">Glycogen biosynthesis</keyword>
<keyword id="KW-0321">Glycogen metabolism</keyword>
<keyword id="KW-0547">Nucleotide-binding</keyword>
<keyword id="KW-0548">Nucleotidyltransferase</keyword>
<keyword id="KW-1185">Reference proteome</keyword>
<keyword id="KW-0808">Transferase</keyword>